<evidence type="ECO:0000255" key="1">
    <source>
        <dbReference type="HAMAP-Rule" id="MF_01059"/>
    </source>
</evidence>
<gene>
    <name evidence="1" type="primary">treF</name>
    <name type="ordered locus">SF3550</name>
    <name type="ordered locus">S4217</name>
</gene>
<sequence>MLNQKIQNPNPDELMIEVDLCYELDPYELKLDEMIEAEPEPEMIEGLPASDALTPADRYLELFEHVQSAKIFPDSKTFPDCAPKMDPLDILIRYRKVRRHRDFDLRKFVENHFWLPEVYSSEYVSDPQNSLKEHIDQLWPVLTREPQDHIPWSSLLALPQSYIVPGGRFSETYYWDSYFTMLGLAESGREDLLKCMADNFAWMIENYGHIPNGNRTYYLSRSQPPVFALMVELFEEDGVRGARRYLDHLKMEYAFWMDGAESLIPNQAYRHVVRMPDGSLLNRYWDDRDTPRDESWLEDVETAKHSGRPPNEVYRDLRAGAASGWDYSSRWLRDTGRLASIRTTQFIPIDLNAFLFKLESAIANISALKGEKETEALFRQKASARRDAVNRYLWDDENGIYRDYDWRREQLALFSAAAIVPLYVGMANHEQADRLANAVRSRLLTPGGILASEYETGEQWDKPNGWAPLQWMAIQGFKMYGDDLLGDEIARSWLKTVNQFYLEQHKMIEKYHIADGVPREGGGGEYPLQDGFGWTNGVVRRLIGLYGEP</sequence>
<proteinExistence type="inferred from homology"/>
<accession>Q83PS8</accession>
<dbReference type="EC" id="3.2.1.28" evidence="1"/>
<dbReference type="EMBL" id="AE005674">
    <property type="protein sequence ID" value="AAN45004.1"/>
    <property type="molecule type" value="Genomic_DNA"/>
</dbReference>
<dbReference type="EMBL" id="AE014073">
    <property type="protein sequence ID" value="AAP19182.1"/>
    <property type="molecule type" value="Genomic_DNA"/>
</dbReference>
<dbReference type="RefSeq" id="NP_709297.1">
    <property type="nucleotide sequence ID" value="NC_004337.2"/>
</dbReference>
<dbReference type="RefSeq" id="WP_000934218.1">
    <property type="nucleotide sequence ID" value="NZ_WPGW01000293.1"/>
</dbReference>
<dbReference type="SMR" id="Q83PS8"/>
<dbReference type="STRING" id="198214.SF3550"/>
<dbReference type="PaxDb" id="198214-SF3550"/>
<dbReference type="GeneID" id="1024626"/>
<dbReference type="KEGG" id="sfl:SF3550"/>
<dbReference type="KEGG" id="sfx:S4217"/>
<dbReference type="PATRIC" id="fig|198214.7.peg.4182"/>
<dbReference type="HOGENOM" id="CLU_006451_3_1_6"/>
<dbReference type="UniPathway" id="UPA00300">
    <property type="reaction ID" value="UER00535"/>
</dbReference>
<dbReference type="Proteomes" id="UP000001006">
    <property type="component" value="Chromosome"/>
</dbReference>
<dbReference type="Proteomes" id="UP000002673">
    <property type="component" value="Chromosome"/>
</dbReference>
<dbReference type="GO" id="GO:0005737">
    <property type="term" value="C:cytoplasm"/>
    <property type="evidence" value="ECO:0007669"/>
    <property type="project" value="UniProtKB-SubCell"/>
</dbReference>
<dbReference type="GO" id="GO:0004555">
    <property type="term" value="F:alpha,alpha-trehalase activity"/>
    <property type="evidence" value="ECO:0007669"/>
    <property type="project" value="UniProtKB-UniRule"/>
</dbReference>
<dbReference type="GO" id="GO:0071474">
    <property type="term" value="P:cellular hyperosmotic response"/>
    <property type="evidence" value="ECO:0007669"/>
    <property type="project" value="InterPro"/>
</dbReference>
<dbReference type="GO" id="GO:0005993">
    <property type="term" value="P:trehalose catabolic process"/>
    <property type="evidence" value="ECO:0007669"/>
    <property type="project" value="UniProtKB-UniRule"/>
</dbReference>
<dbReference type="FunFam" id="1.50.10.10:FF:000003">
    <property type="entry name" value="Cytoplasmic trehalase"/>
    <property type="match status" value="1"/>
</dbReference>
<dbReference type="Gene3D" id="1.50.10.10">
    <property type="match status" value="1"/>
</dbReference>
<dbReference type="HAMAP" id="MF_01059">
    <property type="entry name" value="Cyt_trehalase"/>
    <property type="match status" value="1"/>
</dbReference>
<dbReference type="InterPro" id="IPR008928">
    <property type="entry name" value="6-hairpin_glycosidase_sf"/>
</dbReference>
<dbReference type="InterPro" id="IPR012341">
    <property type="entry name" value="6hp_glycosidase-like_sf"/>
</dbReference>
<dbReference type="InterPro" id="IPR023715">
    <property type="entry name" value="Cyt_trehalase"/>
</dbReference>
<dbReference type="InterPro" id="IPR001661">
    <property type="entry name" value="Glyco_hydro_37"/>
</dbReference>
<dbReference type="InterPro" id="IPR018232">
    <property type="entry name" value="Glyco_hydro_37_CS"/>
</dbReference>
<dbReference type="NCBIfam" id="NF009773">
    <property type="entry name" value="PRK13270.1"/>
    <property type="match status" value="1"/>
</dbReference>
<dbReference type="NCBIfam" id="NF009774">
    <property type="entry name" value="PRK13271.1"/>
    <property type="match status" value="1"/>
</dbReference>
<dbReference type="PANTHER" id="PTHR23403:SF8">
    <property type="entry name" value="CYTOPLASMIC TREHALASE"/>
    <property type="match status" value="1"/>
</dbReference>
<dbReference type="PANTHER" id="PTHR23403">
    <property type="entry name" value="TREHALASE"/>
    <property type="match status" value="1"/>
</dbReference>
<dbReference type="Pfam" id="PF01204">
    <property type="entry name" value="Trehalase"/>
    <property type="match status" value="1"/>
</dbReference>
<dbReference type="PRINTS" id="PR00744">
    <property type="entry name" value="GLHYDRLASE37"/>
</dbReference>
<dbReference type="SUPFAM" id="SSF48208">
    <property type="entry name" value="Six-hairpin glycosidases"/>
    <property type="match status" value="1"/>
</dbReference>
<dbReference type="PROSITE" id="PS00927">
    <property type="entry name" value="TREHALASE_1"/>
    <property type="match status" value="1"/>
</dbReference>
<dbReference type="PROSITE" id="PS00928">
    <property type="entry name" value="TREHALASE_2"/>
    <property type="match status" value="1"/>
</dbReference>
<feature type="chain" id="PRO_0000173791" description="Cytoplasmic trehalase">
    <location>
        <begin position="1"/>
        <end position="549"/>
    </location>
</feature>
<feature type="active site" description="Proton donor/acceptor" evidence="1">
    <location>
        <position position="326"/>
    </location>
</feature>
<feature type="active site" description="Proton donor/acceptor" evidence="1">
    <location>
        <position position="509"/>
    </location>
</feature>
<feature type="binding site" evidence="1">
    <location>
        <position position="168"/>
    </location>
    <ligand>
        <name>substrate</name>
    </ligand>
</feature>
<feature type="binding site" evidence="1">
    <location>
        <begin position="175"/>
        <end position="176"/>
    </location>
    <ligand>
        <name>substrate</name>
    </ligand>
</feature>
<feature type="binding site" evidence="1">
    <location>
        <position position="212"/>
    </location>
    <ligand>
        <name>substrate</name>
    </ligand>
</feature>
<feature type="binding site" evidence="1">
    <location>
        <begin position="221"/>
        <end position="223"/>
    </location>
    <ligand>
        <name>substrate</name>
    </ligand>
</feature>
<feature type="binding site" evidence="1">
    <location>
        <begin position="292"/>
        <end position="294"/>
    </location>
    <ligand>
        <name>substrate</name>
    </ligand>
</feature>
<feature type="binding site" evidence="1">
    <location>
        <position position="324"/>
    </location>
    <ligand>
        <name>substrate</name>
    </ligand>
</feature>
<feature type="binding site" evidence="1">
    <location>
        <position position="525"/>
    </location>
    <ligand>
        <name>substrate</name>
    </ligand>
</feature>
<reference key="1">
    <citation type="journal article" date="2002" name="Nucleic Acids Res.">
        <title>Genome sequence of Shigella flexneri 2a: insights into pathogenicity through comparison with genomes of Escherichia coli K12 and O157.</title>
        <authorList>
            <person name="Jin Q."/>
            <person name="Yuan Z."/>
            <person name="Xu J."/>
            <person name="Wang Y."/>
            <person name="Shen Y."/>
            <person name="Lu W."/>
            <person name="Wang J."/>
            <person name="Liu H."/>
            <person name="Yang J."/>
            <person name="Yang F."/>
            <person name="Zhang X."/>
            <person name="Zhang J."/>
            <person name="Yang G."/>
            <person name="Wu H."/>
            <person name="Qu D."/>
            <person name="Dong J."/>
            <person name="Sun L."/>
            <person name="Xue Y."/>
            <person name="Zhao A."/>
            <person name="Gao Y."/>
            <person name="Zhu J."/>
            <person name="Kan B."/>
            <person name="Ding K."/>
            <person name="Chen S."/>
            <person name="Cheng H."/>
            <person name="Yao Z."/>
            <person name="He B."/>
            <person name="Chen R."/>
            <person name="Ma D."/>
            <person name="Qiang B."/>
            <person name="Wen Y."/>
            <person name="Hou Y."/>
            <person name="Yu J."/>
        </authorList>
    </citation>
    <scope>NUCLEOTIDE SEQUENCE [LARGE SCALE GENOMIC DNA]</scope>
    <source>
        <strain>301 / Serotype 2a</strain>
    </source>
</reference>
<reference key="2">
    <citation type="journal article" date="2003" name="Infect. Immun.">
        <title>Complete genome sequence and comparative genomics of Shigella flexneri serotype 2a strain 2457T.</title>
        <authorList>
            <person name="Wei J."/>
            <person name="Goldberg M.B."/>
            <person name="Burland V."/>
            <person name="Venkatesan M.M."/>
            <person name="Deng W."/>
            <person name="Fournier G."/>
            <person name="Mayhew G.F."/>
            <person name="Plunkett G. III"/>
            <person name="Rose D.J."/>
            <person name="Darling A."/>
            <person name="Mau B."/>
            <person name="Perna N.T."/>
            <person name="Payne S.M."/>
            <person name="Runyen-Janecky L.J."/>
            <person name="Zhou S."/>
            <person name="Schwartz D.C."/>
            <person name="Blattner F.R."/>
        </authorList>
    </citation>
    <scope>NUCLEOTIDE SEQUENCE [LARGE SCALE GENOMIC DNA]</scope>
    <source>
        <strain>ATCC 700930 / 2457T / Serotype 2a</strain>
    </source>
</reference>
<name>TREF_SHIFL</name>
<protein>
    <recommendedName>
        <fullName evidence="1">Cytoplasmic trehalase</fullName>
        <ecNumber evidence="1">3.2.1.28</ecNumber>
    </recommendedName>
    <alternativeName>
        <fullName evidence="1">Alpha,alpha-trehalase</fullName>
    </alternativeName>
    <alternativeName>
        <fullName evidence="1">Alpha,alpha-trehalose glucohydrolase</fullName>
    </alternativeName>
</protein>
<organism>
    <name type="scientific">Shigella flexneri</name>
    <dbReference type="NCBI Taxonomy" id="623"/>
    <lineage>
        <taxon>Bacteria</taxon>
        <taxon>Pseudomonadati</taxon>
        <taxon>Pseudomonadota</taxon>
        <taxon>Gammaproteobacteria</taxon>
        <taxon>Enterobacterales</taxon>
        <taxon>Enterobacteriaceae</taxon>
        <taxon>Shigella</taxon>
    </lineage>
</organism>
<comment type="function">
    <text evidence="1">Hydrolyzes trehalose to glucose. Could be involved, in cells returning to low osmolarity conditions, in the utilization of the accumulated cytoplasmic trehalose, which was synthesized in response to high osmolarity.</text>
</comment>
<comment type="catalytic activity">
    <reaction evidence="1">
        <text>alpha,alpha-trehalose + H2O = alpha-D-glucose + beta-D-glucose</text>
        <dbReference type="Rhea" id="RHEA:32675"/>
        <dbReference type="ChEBI" id="CHEBI:15377"/>
        <dbReference type="ChEBI" id="CHEBI:15903"/>
        <dbReference type="ChEBI" id="CHEBI:16551"/>
        <dbReference type="ChEBI" id="CHEBI:17925"/>
        <dbReference type="EC" id="3.2.1.28"/>
    </reaction>
</comment>
<comment type="pathway">
    <text evidence="1">Glycan degradation; trehalose degradation; D-glucose from alpha,alpha-trehalose: step 1/1.</text>
</comment>
<comment type="subunit">
    <text evidence="1">Monomer.</text>
</comment>
<comment type="subcellular location">
    <subcellularLocation>
        <location evidence="1">Cytoplasm</location>
    </subcellularLocation>
</comment>
<comment type="similarity">
    <text evidence="1">Belongs to the glycosyl hydrolase 37 family.</text>
</comment>
<keyword id="KW-0963">Cytoplasm</keyword>
<keyword id="KW-0326">Glycosidase</keyword>
<keyword id="KW-0378">Hydrolase</keyword>
<keyword id="KW-1185">Reference proteome</keyword>